<dbReference type="EMBL" id="AB012239">
    <property type="protein sequence ID" value="BAB09013.1"/>
    <property type="molecule type" value="Genomic_DNA"/>
</dbReference>
<dbReference type="EMBL" id="CP002688">
    <property type="protein sequence ID" value="ANM70574.1"/>
    <property type="molecule type" value="Genomic_DNA"/>
</dbReference>
<dbReference type="RefSeq" id="NP_001332171.1">
    <property type="nucleotide sequence ID" value="NM_001345488.1"/>
</dbReference>
<dbReference type="SMR" id="Q9FKF2"/>
<dbReference type="FunCoup" id="Q9FKF2">
    <property type="interactions" value="2"/>
</dbReference>
<dbReference type="STRING" id="3702.Q9FKF2"/>
<dbReference type="iPTMnet" id="Q9FKF2"/>
<dbReference type="PaxDb" id="3702-AT5G61690.1"/>
<dbReference type="ProteomicsDB" id="244557"/>
<dbReference type="EnsemblPlants" id="AT5G61690.2">
    <property type="protein sequence ID" value="AT5G61690.2"/>
    <property type="gene ID" value="AT5G61690"/>
</dbReference>
<dbReference type="GeneID" id="836291"/>
<dbReference type="Gramene" id="AT5G61690.2">
    <property type="protein sequence ID" value="AT5G61690.2"/>
    <property type="gene ID" value="AT5G61690"/>
</dbReference>
<dbReference type="KEGG" id="ath:AT5G61690"/>
<dbReference type="Araport" id="AT5G61690"/>
<dbReference type="TAIR" id="AT5G61690">
    <property type="gene designation" value="ABCA11"/>
</dbReference>
<dbReference type="eggNOG" id="KOG0059">
    <property type="taxonomic scope" value="Eukaryota"/>
</dbReference>
<dbReference type="HOGENOM" id="CLU_000604_19_5_1"/>
<dbReference type="InParanoid" id="Q9FKF2"/>
<dbReference type="OMA" id="LAWYFEH"/>
<dbReference type="PRO" id="PR:Q9FKF2"/>
<dbReference type="Proteomes" id="UP000006548">
    <property type="component" value="Chromosome 5"/>
</dbReference>
<dbReference type="ExpressionAtlas" id="Q9FKF2">
    <property type="expression patterns" value="baseline"/>
</dbReference>
<dbReference type="GO" id="GO:0016020">
    <property type="term" value="C:membrane"/>
    <property type="evidence" value="ECO:0007669"/>
    <property type="project" value="UniProtKB-SubCell"/>
</dbReference>
<dbReference type="GO" id="GO:0140359">
    <property type="term" value="F:ABC-type transporter activity"/>
    <property type="evidence" value="ECO:0007669"/>
    <property type="project" value="InterPro"/>
</dbReference>
<dbReference type="GO" id="GO:0005524">
    <property type="term" value="F:ATP binding"/>
    <property type="evidence" value="ECO:0007669"/>
    <property type="project" value="UniProtKB-KW"/>
</dbReference>
<dbReference type="GO" id="GO:0016887">
    <property type="term" value="F:ATP hydrolysis activity"/>
    <property type="evidence" value="ECO:0007669"/>
    <property type="project" value="InterPro"/>
</dbReference>
<dbReference type="CDD" id="cd03263">
    <property type="entry name" value="ABC_subfamily_A"/>
    <property type="match status" value="1"/>
</dbReference>
<dbReference type="FunFam" id="3.40.50.300:FF:000665">
    <property type="entry name" value="ABC transporter A family member 2"/>
    <property type="match status" value="1"/>
</dbReference>
<dbReference type="Gene3D" id="3.40.50.300">
    <property type="entry name" value="P-loop containing nucleotide triphosphate hydrolases"/>
    <property type="match status" value="1"/>
</dbReference>
<dbReference type="InterPro" id="IPR003593">
    <property type="entry name" value="AAA+_ATPase"/>
</dbReference>
<dbReference type="InterPro" id="IPR013525">
    <property type="entry name" value="ABC2_TM"/>
</dbReference>
<dbReference type="InterPro" id="IPR003439">
    <property type="entry name" value="ABC_transporter-like_ATP-bd"/>
</dbReference>
<dbReference type="InterPro" id="IPR017871">
    <property type="entry name" value="ABC_transporter-like_CS"/>
</dbReference>
<dbReference type="InterPro" id="IPR026082">
    <property type="entry name" value="ABCA"/>
</dbReference>
<dbReference type="InterPro" id="IPR056788">
    <property type="entry name" value="ABCA2/9/11_C"/>
</dbReference>
<dbReference type="InterPro" id="IPR027417">
    <property type="entry name" value="P-loop_NTPase"/>
</dbReference>
<dbReference type="PANTHER" id="PTHR19229:SF207">
    <property type="entry name" value="ABC TRANSPORTER A FAMILY MEMBER 11-RELATED"/>
    <property type="match status" value="1"/>
</dbReference>
<dbReference type="PANTHER" id="PTHR19229">
    <property type="entry name" value="ATP-BINDING CASSETTE TRANSPORTER SUBFAMILY A ABCA"/>
    <property type="match status" value="1"/>
</dbReference>
<dbReference type="Pfam" id="PF12698">
    <property type="entry name" value="ABC2_membrane_3"/>
    <property type="match status" value="1"/>
</dbReference>
<dbReference type="Pfam" id="PF00005">
    <property type="entry name" value="ABC_tran"/>
    <property type="match status" value="1"/>
</dbReference>
<dbReference type="Pfam" id="PF25158">
    <property type="entry name" value="ABCA11_C"/>
    <property type="match status" value="1"/>
</dbReference>
<dbReference type="SMART" id="SM00382">
    <property type="entry name" value="AAA"/>
    <property type="match status" value="1"/>
</dbReference>
<dbReference type="SUPFAM" id="SSF52540">
    <property type="entry name" value="P-loop containing nucleoside triphosphate hydrolases"/>
    <property type="match status" value="1"/>
</dbReference>
<dbReference type="PROSITE" id="PS00211">
    <property type="entry name" value="ABC_TRANSPORTER_1"/>
    <property type="match status" value="1"/>
</dbReference>
<dbReference type="PROSITE" id="PS50893">
    <property type="entry name" value="ABC_TRANSPORTER_2"/>
    <property type="match status" value="1"/>
</dbReference>
<name>AB11A_ARATH</name>
<gene>
    <name type="primary">ABCA11</name>
    <name type="synonym">ATH15</name>
    <name type="ordered locus">At5g61690</name>
    <name type="ORF">K11J9.22</name>
</gene>
<accession>Q9FKF2</accession>
<accession>F4K3L3</accession>
<keyword id="KW-0067">ATP-binding</keyword>
<keyword id="KW-0472">Membrane</keyword>
<keyword id="KW-0547">Nucleotide-binding</keyword>
<keyword id="KW-1185">Reference proteome</keyword>
<keyword id="KW-0812">Transmembrane</keyword>
<keyword id="KW-1133">Transmembrane helix</keyword>
<keyword id="KW-0813">Transport</keyword>
<reference key="1">
    <citation type="journal article" date="1998" name="DNA Res.">
        <title>Structural analysis of Arabidopsis thaliana chromosome 5. VI. Sequence features of the regions of 1,367,185 bp covered by 19 physically assigned P1 and TAC clones.</title>
        <authorList>
            <person name="Kotani H."/>
            <person name="Nakamura Y."/>
            <person name="Sato S."/>
            <person name="Asamizu E."/>
            <person name="Kaneko T."/>
            <person name="Miyajima N."/>
            <person name="Tabata S."/>
        </authorList>
    </citation>
    <scope>NUCLEOTIDE SEQUENCE [LARGE SCALE GENOMIC DNA]</scope>
    <source>
        <strain>cv. Columbia</strain>
    </source>
</reference>
<reference key="2">
    <citation type="journal article" date="2017" name="Plant J.">
        <title>Araport11: a complete reannotation of the Arabidopsis thaliana reference genome.</title>
        <authorList>
            <person name="Cheng C.Y."/>
            <person name="Krishnakumar V."/>
            <person name="Chan A.P."/>
            <person name="Thibaud-Nissen F."/>
            <person name="Schobel S."/>
            <person name="Town C.D."/>
        </authorList>
    </citation>
    <scope>GENOME REANNOTATION</scope>
    <source>
        <strain>cv. Columbia</strain>
    </source>
</reference>
<reference key="3">
    <citation type="journal article" date="2001" name="J. Biol. Chem.">
        <title>The Arabidopsis thaliana ABC protein superfamily, a complete inventory.</title>
        <authorList>
            <person name="Sanchez-Fernandez R."/>
            <person name="Davies T.G."/>
            <person name="Coleman J.O."/>
            <person name="Rea P.A."/>
        </authorList>
    </citation>
    <scope>GENE FAMILY</scope>
    <scope>NOMENCLATURE</scope>
</reference>
<reference key="4">
    <citation type="journal article" date="2008" name="Trends Plant Sci.">
        <title>Plant ABC proteins - a unified nomenclature and updated inventory.</title>
        <authorList>
            <person name="Verrier P.J."/>
            <person name="Bird D."/>
            <person name="Burla B."/>
            <person name="Dassa E."/>
            <person name="Forestier C."/>
            <person name="Geisler M."/>
            <person name="Klein M."/>
            <person name="Kolukisaoglu H.U."/>
            <person name="Lee Y."/>
            <person name="Martinoia E."/>
            <person name="Murphy A."/>
            <person name="Rea P.A."/>
            <person name="Samuels L."/>
            <person name="Schulz B."/>
            <person name="Spalding E.J."/>
            <person name="Yazaki K."/>
            <person name="Theodoulou F.L."/>
        </authorList>
    </citation>
    <scope>GENE FAMILY</scope>
    <scope>NOMENCLATURE</scope>
</reference>
<feature type="chain" id="PRO_0000240333" description="ABC transporter A family member 11">
    <location>
        <begin position="1"/>
        <end position="953"/>
    </location>
</feature>
<feature type="transmembrane region" description="Helical" evidence="1">
    <location>
        <begin position="33"/>
        <end position="53"/>
    </location>
</feature>
<feature type="transmembrane region" description="Helical" evidence="1">
    <location>
        <begin position="230"/>
        <end position="250"/>
    </location>
</feature>
<feature type="transmembrane region" description="Helical" evidence="1">
    <location>
        <begin position="277"/>
        <end position="297"/>
    </location>
</feature>
<feature type="transmembrane region" description="Helical" evidence="1">
    <location>
        <begin position="307"/>
        <end position="327"/>
    </location>
</feature>
<feature type="transmembrane region" description="Helical" evidence="1">
    <location>
        <begin position="341"/>
        <end position="361"/>
    </location>
</feature>
<feature type="transmembrane region" description="Helical" evidence="1">
    <location>
        <begin position="417"/>
        <end position="437"/>
    </location>
</feature>
<feature type="domain" description="ABC transporter" evidence="2">
    <location>
        <begin position="519"/>
        <end position="764"/>
    </location>
</feature>
<feature type="binding site" evidence="2">
    <location>
        <begin position="565"/>
        <end position="572"/>
    </location>
    <ligand>
        <name>ATP</name>
        <dbReference type="ChEBI" id="CHEBI:30616"/>
    </ligand>
</feature>
<evidence type="ECO:0000255" key="1"/>
<evidence type="ECO:0000255" key="2">
    <source>
        <dbReference type="PROSITE-ProRule" id="PRU00434"/>
    </source>
</evidence>
<evidence type="ECO:0000305" key="3"/>
<comment type="subcellular location">
    <subcellularLocation>
        <location evidence="3">Membrane</location>
        <topology evidence="3">Multi-pass membrane protein</topology>
    </subcellularLocation>
</comment>
<comment type="similarity">
    <text evidence="3">Belongs to the ABC transporter superfamily. ABCA family. CPR flippase (TC 3.A.1.211) subfamily.</text>
</comment>
<organism>
    <name type="scientific">Arabidopsis thaliana</name>
    <name type="common">Mouse-ear cress</name>
    <dbReference type="NCBI Taxonomy" id="3702"/>
    <lineage>
        <taxon>Eukaryota</taxon>
        <taxon>Viridiplantae</taxon>
        <taxon>Streptophyta</taxon>
        <taxon>Embryophyta</taxon>
        <taxon>Tracheophyta</taxon>
        <taxon>Spermatophyta</taxon>
        <taxon>Magnoliopsida</taxon>
        <taxon>eudicotyledons</taxon>
        <taxon>Gunneridae</taxon>
        <taxon>Pentapetalae</taxon>
        <taxon>rosids</taxon>
        <taxon>malvids</taxon>
        <taxon>Brassicales</taxon>
        <taxon>Brassicaceae</taxon>
        <taxon>Camelineae</taxon>
        <taxon>Arabidopsis</taxon>
    </lineage>
</organism>
<proteinExistence type="inferred from homology"/>
<protein>
    <recommendedName>
        <fullName>ABC transporter A family member 11</fullName>
        <shortName>ABC transporter ABCA.11</shortName>
        <shortName>AtABCA11</shortName>
    </recommendedName>
    <alternativeName>
        <fullName>Putative ABC2 homolog 15</fullName>
    </alternativeName>
</protein>
<sequence length="953" mass="104707">MILQEGLPLLYQQFTALFGKNLLLSWRNKRATCLQIFSSFFFILLIFCIEEAMKASDASSSAYKNITDPTLLVSPPILPCEDKFFVKLPCYDFVWSGNNSRRVTDIVSAIMANNPGRPIPTNKVQSFKEPDEVDTWLLSHPLQVPGALHFVERNASVISYGVQTNSSSESKRGQTEDPTFKFLVPLQVAAEREIARSLLGDPNFGWGLGFKEFARPAIITETTSALSVMGPVFFLAFSMFGFVLQLGALVTEKELKLRQAMTMMGVYDSAYWLSWLTWEGILTLVSSLFLVLFGMIFRFDFFLKNSFVLVFLLFLLFQFNMIGLAFALSSIISKSSSATTVGFLVFLIGFITQFVSATGFPYSSSYAVSRRVMWSLFPPNTFSAGLKLLLDATSTPKSSGISWSNRAVCEGGQATCVISINIIYQWLLGTFLFWFVLAIYFDNIIPNASGVRKPIFYFLAPGYWTGKGGNKVEEGSIFSCVGSVPLVEHNTPNDKDVLEEETEVKQQAMDGIADPNIAVQIHGLAKTYPGTTKLGCCKCTKTSPFHAVKGLWMNIAKDQLFCLLGPNGAGKTTTISCLTGINPVTGGDALIYGDSIRSSVGISNIRKMIGVCPQFDILWDALSSEQHLHLFASIKGLPPASIKSTAEKLLADVKLTGAAKVRAGSYSGGMKRRLSVAVALIGDPKLVFLDEPTTGMDPITRRHVWDIIQESKKGRAIILTTHSMEEADILSDRIGIMAKGRLRCIGTSIRLKSRFGTGFVATVSFIENKNDNNIGVGASHEPLKKFFKEHLKVEPTEENKAFMTFVIPHDKENLLTGFFEELQNRESEFGISDIQLGLATLEEVFLNIARQAELESATAEGNMVTLELASGISLEIPVGARFVGIPDTENAENPSGVMVEVYWQQDGSGSMCISGHSSEMRVPQNVPVTRPPSPNALGHKSLRQGVRGIVIDL</sequence>